<evidence type="ECO:0000250" key="1">
    <source>
        <dbReference type="UniProtKB" id="Q5I043"/>
    </source>
</evidence>
<evidence type="ECO:0000255" key="2">
    <source>
        <dbReference type="PROSITE-ProRule" id="PRU10092"/>
    </source>
</evidence>
<evidence type="ECO:0000255" key="3">
    <source>
        <dbReference type="PROSITE-ProRule" id="PRU10093"/>
    </source>
</evidence>
<evidence type="ECO:0000256" key="4">
    <source>
        <dbReference type="SAM" id="MobiDB-lite"/>
    </source>
</evidence>
<evidence type="ECO:0000269" key="5">
    <source>
    </source>
</evidence>
<evidence type="ECO:0000269" key="6">
    <source>
    </source>
</evidence>
<evidence type="ECO:0000269" key="7">
    <source>
    </source>
</evidence>
<evidence type="ECO:0000269" key="8">
    <source>
    </source>
</evidence>
<evidence type="ECO:0000269" key="9">
    <source>
    </source>
</evidence>
<evidence type="ECO:0000269" key="10">
    <source>
    </source>
</evidence>
<evidence type="ECO:0000303" key="11">
    <source>
    </source>
</evidence>
<evidence type="ECO:0000303" key="12">
    <source>
    </source>
</evidence>
<evidence type="ECO:0000305" key="13"/>
<evidence type="ECO:0007744" key="14">
    <source>
    </source>
</evidence>
<evidence type="ECO:0007744" key="15">
    <source>
    </source>
</evidence>
<evidence type="ECO:0007744" key="16">
    <source>
    </source>
</evidence>
<evidence type="ECO:0007829" key="17">
    <source>
        <dbReference type="PDB" id="2LVA"/>
    </source>
</evidence>
<evidence type="ECO:0007829" key="18">
    <source>
        <dbReference type="PDB" id="2MUU"/>
    </source>
</evidence>
<evidence type="ECO:0007829" key="19">
    <source>
        <dbReference type="PDB" id="6HEH"/>
    </source>
</evidence>
<evidence type="ECO:0007829" key="20">
    <source>
        <dbReference type="PDB" id="6HEI"/>
    </source>
</evidence>
<evidence type="ECO:0007829" key="21">
    <source>
        <dbReference type="PDB" id="6HEJ"/>
    </source>
</evidence>
<evidence type="ECO:0007829" key="22">
    <source>
        <dbReference type="PDB" id="7TUO"/>
    </source>
</evidence>
<evidence type="ECO:0007829" key="23">
    <source>
        <dbReference type="PDB" id="8P1P"/>
    </source>
</evidence>
<evidence type="ECO:0007829" key="24">
    <source>
        <dbReference type="PDB" id="8P1Q"/>
    </source>
</evidence>
<dbReference type="EC" id="3.4.19.12"/>
<dbReference type="EMBL" id="AF266283">
    <property type="protein sequence ID" value="AAK58565.1"/>
    <property type="molecule type" value="mRNA"/>
</dbReference>
<dbReference type="EMBL" id="EF445045">
    <property type="protein sequence ID" value="ACA06098.1"/>
    <property type="molecule type" value="Genomic_DNA"/>
</dbReference>
<dbReference type="EMBL" id="EF445045">
    <property type="protein sequence ID" value="ACA06099.1"/>
    <property type="molecule type" value="Genomic_DNA"/>
</dbReference>
<dbReference type="EMBL" id="AP001874">
    <property type="status" value="NOT_ANNOTATED_CDS"/>
    <property type="molecule type" value="Genomic_DNA"/>
</dbReference>
<dbReference type="EMBL" id="AP003170">
    <property type="status" value="NOT_ANNOTATED_CDS"/>
    <property type="molecule type" value="Genomic_DNA"/>
</dbReference>
<dbReference type="EMBL" id="KF455523">
    <property type="status" value="NOT_ANNOTATED_CDS"/>
    <property type="molecule type" value="Genomic_DNA"/>
</dbReference>
<dbReference type="EMBL" id="KF459544">
    <property type="status" value="NOT_ANNOTATED_CDS"/>
    <property type="molecule type" value="Genomic_DNA"/>
</dbReference>
<dbReference type="EMBL" id="CH471065">
    <property type="protein sequence ID" value="EAW67232.1"/>
    <property type="molecule type" value="Genomic_DNA"/>
</dbReference>
<dbReference type="EMBL" id="BC065928">
    <property type="protein sequence ID" value="AAH65928.1"/>
    <property type="molecule type" value="mRNA"/>
</dbReference>
<dbReference type="EMBL" id="AB040948">
    <property type="protein sequence ID" value="BAA96039.1"/>
    <property type="molecule type" value="mRNA"/>
</dbReference>
<dbReference type="CCDS" id="CCDS31680.1">
    <molecule id="Q96RU2-1"/>
</dbReference>
<dbReference type="CCDS" id="CCDS86248.1">
    <molecule id="Q96RU2-3"/>
</dbReference>
<dbReference type="RefSeq" id="NP_001333187.1">
    <molecule id="Q96RU2-2"/>
    <property type="nucleotide sequence ID" value="NM_001346258.2"/>
</dbReference>
<dbReference type="RefSeq" id="NP_001333202.1">
    <molecule id="Q96RU2-3"/>
    <property type="nucleotide sequence ID" value="NM_001346273.2"/>
</dbReference>
<dbReference type="RefSeq" id="NP_065937.1">
    <molecule id="Q96RU2-1"/>
    <property type="nucleotide sequence ID" value="NM_020886.4"/>
</dbReference>
<dbReference type="PDB" id="2LVA">
    <property type="method" value="NMR"/>
    <property type="chains" value="A=22-132"/>
</dbReference>
<dbReference type="PDB" id="2MUU">
    <property type="method" value="NMR"/>
    <property type="chains" value="A=1-120"/>
</dbReference>
<dbReference type="PDB" id="6H4H">
    <property type="method" value="X-ray"/>
    <property type="resolution" value="3.50 A"/>
    <property type="chains" value="A/B=149-707"/>
</dbReference>
<dbReference type="PDB" id="6H4I">
    <property type="method" value="X-ray"/>
    <property type="resolution" value="3.22 A"/>
    <property type="chains" value="A/C=148-707"/>
</dbReference>
<dbReference type="PDB" id="6HEH">
    <property type="method" value="X-ray"/>
    <property type="resolution" value="2.26 A"/>
    <property type="chains" value="A=149-399, A=580-703"/>
</dbReference>
<dbReference type="PDB" id="6HEI">
    <property type="method" value="X-ray"/>
    <property type="resolution" value="1.64 A"/>
    <property type="chains" value="A=149-399, A=580-703"/>
</dbReference>
<dbReference type="PDB" id="6HEJ">
    <property type="method" value="X-ray"/>
    <property type="resolution" value="2.79 A"/>
    <property type="chains" value="A/B=149-703"/>
</dbReference>
<dbReference type="PDB" id="6HEK">
    <property type="method" value="X-ray"/>
    <property type="resolution" value="3.03 A"/>
    <property type="chains" value="A/C=149-703"/>
</dbReference>
<dbReference type="PDB" id="7TUO">
    <property type="method" value="X-ray"/>
    <property type="resolution" value="1.96 A"/>
    <property type="chains" value="A=149-399, A=580-703"/>
</dbReference>
<dbReference type="PDB" id="8HJE">
    <property type="method" value="X-ray"/>
    <property type="resolution" value="2.85 A"/>
    <property type="chains" value="A=150-399, A=580-703"/>
</dbReference>
<dbReference type="PDB" id="8P14">
    <property type="method" value="X-ray"/>
    <property type="resolution" value="2.57 A"/>
    <property type="chains" value="A=149-399, A=580-698"/>
</dbReference>
<dbReference type="PDB" id="8P19">
    <property type="method" value="X-ray"/>
    <property type="resolution" value="2.45 A"/>
    <property type="chains" value="A=149-399, A=580-698"/>
</dbReference>
<dbReference type="PDB" id="8P1P">
    <property type="method" value="X-ray"/>
    <property type="resolution" value="2.76 A"/>
    <property type="chains" value="A/B=149-458, A/B=529-707"/>
</dbReference>
<dbReference type="PDB" id="8P1Q">
    <property type="method" value="X-ray"/>
    <property type="resolution" value="2.79 A"/>
    <property type="chains" value="A/B=149-458, A/B=529-707"/>
</dbReference>
<dbReference type="PDBsum" id="2LVA"/>
<dbReference type="PDBsum" id="2MUU"/>
<dbReference type="PDBsum" id="6H4H"/>
<dbReference type="PDBsum" id="6H4I"/>
<dbReference type="PDBsum" id="6HEH"/>
<dbReference type="PDBsum" id="6HEI"/>
<dbReference type="PDBsum" id="6HEJ"/>
<dbReference type="PDBsum" id="6HEK"/>
<dbReference type="PDBsum" id="7TUO"/>
<dbReference type="PDBsum" id="8HJE"/>
<dbReference type="PDBsum" id="8P14"/>
<dbReference type="PDBsum" id="8P19"/>
<dbReference type="PDBsum" id="8P1P"/>
<dbReference type="PDBsum" id="8P1Q"/>
<dbReference type="BMRB" id="Q96RU2"/>
<dbReference type="SMR" id="Q96RU2"/>
<dbReference type="BioGRID" id="121683">
    <property type="interactions" value="120"/>
</dbReference>
<dbReference type="FunCoup" id="Q96RU2">
    <property type="interactions" value="1916"/>
</dbReference>
<dbReference type="IntAct" id="Q96RU2">
    <property type="interactions" value="44"/>
</dbReference>
<dbReference type="MINT" id="Q96RU2"/>
<dbReference type="STRING" id="9606.ENSP00000003302"/>
<dbReference type="BindingDB" id="Q96RU2"/>
<dbReference type="ChEMBL" id="CHEMBL2157853"/>
<dbReference type="MEROPS" id="C19.054"/>
<dbReference type="GlyGen" id="Q96RU2">
    <property type="glycosylation" value="2 sites, 1 N-linked glycan (1 site), 1 O-linked glycan (1 site)"/>
</dbReference>
<dbReference type="iPTMnet" id="Q96RU2"/>
<dbReference type="PhosphoSitePlus" id="Q96RU2"/>
<dbReference type="BioMuta" id="USP28"/>
<dbReference type="DMDM" id="20140700"/>
<dbReference type="jPOST" id="Q96RU2"/>
<dbReference type="MassIVE" id="Q96RU2"/>
<dbReference type="PaxDb" id="9606-ENSP00000003302"/>
<dbReference type="PeptideAtlas" id="Q96RU2"/>
<dbReference type="ProteomicsDB" id="66797"/>
<dbReference type="ProteomicsDB" id="78033">
    <molecule id="Q96RU2-1"/>
</dbReference>
<dbReference type="ProteomicsDB" id="78034">
    <molecule id="Q96RU2-2"/>
</dbReference>
<dbReference type="Pumba" id="Q96RU2"/>
<dbReference type="Antibodypedia" id="1708">
    <property type="antibodies" value="302 antibodies from 37 providers"/>
</dbReference>
<dbReference type="DNASU" id="57646"/>
<dbReference type="Ensembl" id="ENST00000003302.8">
    <molecule id="Q96RU2-1"/>
    <property type="protein sequence ID" value="ENSP00000003302.4"/>
    <property type="gene ID" value="ENSG00000048028.12"/>
</dbReference>
<dbReference type="Ensembl" id="ENST00000537706.5">
    <molecule id="Q96RU2-3"/>
    <property type="protein sequence ID" value="ENSP00000445743.1"/>
    <property type="gene ID" value="ENSG00000048028.12"/>
</dbReference>
<dbReference type="GeneID" id="57646"/>
<dbReference type="KEGG" id="hsa:57646"/>
<dbReference type="UCSC" id="uc001poh.4">
    <molecule id="Q96RU2-1"/>
    <property type="organism name" value="human"/>
</dbReference>
<dbReference type="AGR" id="HGNC:12625"/>
<dbReference type="CTD" id="57646"/>
<dbReference type="DisGeNET" id="57646"/>
<dbReference type="GeneCards" id="USP28"/>
<dbReference type="HGNC" id="HGNC:12625">
    <property type="gene designation" value="USP28"/>
</dbReference>
<dbReference type="HPA" id="ENSG00000048028">
    <property type="expression patterns" value="Tissue enhanced (skeletal)"/>
</dbReference>
<dbReference type="MalaCards" id="USP28"/>
<dbReference type="MIM" id="610748">
    <property type="type" value="gene"/>
</dbReference>
<dbReference type="neXtProt" id="NX_Q96RU2"/>
<dbReference type="OpenTargets" id="ENSG00000048028"/>
<dbReference type="PharmGKB" id="PA37250"/>
<dbReference type="VEuPathDB" id="HostDB:ENSG00000048028"/>
<dbReference type="eggNOG" id="KOG1863">
    <property type="taxonomic scope" value="Eukaryota"/>
</dbReference>
<dbReference type="GeneTree" id="ENSGT00940000157670"/>
<dbReference type="HOGENOM" id="CLU_467647_0_0_1"/>
<dbReference type="InParanoid" id="Q96RU2"/>
<dbReference type="OMA" id="HANQRWL"/>
<dbReference type="OrthoDB" id="2420415at2759"/>
<dbReference type="PAN-GO" id="Q96RU2">
    <property type="GO annotations" value="6 GO annotations based on evolutionary models"/>
</dbReference>
<dbReference type="PhylomeDB" id="Q96RU2"/>
<dbReference type="TreeFam" id="TF329035"/>
<dbReference type="PathwayCommons" id="Q96RU2"/>
<dbReference type="Reactome" id="R-HSA-5689880">
    <property type="pathway name" value="Ub-specific processing proteases"/>
</dbReference>
<dbReference type="SABIO-RK" id="Q96RU2"/>
<dbReference type="SignaLink" id="Q96RU2"/>
<dbReference type="SIGNOR" id="Q96RU2"/>
<dbReference type="BioGRID-ORCS" id="57646">
    <property type="hits" value="18 hits in 1210 CRISPR screens"/>
</dbReference>
<dbReference type="ChiTaRS" id="USP28">
    <property type="organism name" value="human"/>
</dbReference>
<dbReference type="EvolutionaryTrace" id="Q96RU2"/>
<dbReference type="GenomeRNAi" id="57646"/>
<dbReference type="Pharos" id="Q96RU2">
    <property type="development level" value="Tchem"/>
</dbReference>
<dbReference type="PRO" id="PR:Q96RU2"/>
<dbReference type="Proteomes" id="UP000005640">
    <property type="component" value="Chromosome 11"/>
</dbReference>
<dbReference type="RNAct" id="Q96RU2">
    <property type="molecule type" value="protein"/>
</dbReference>
<dbReference type="Bgee" id="ENSG00000048028">
    <property type="expression patterns" value="Expressed in gastrocnemius and 184 other cell types or tissues"/>
</dbReference>
<dbReference type="ExpressionAtlas" id="Q96RU2">
    <property type="expression patterns" value="baseline and differential"/>
</dbReference>
<dbReference type="GO" id="GO:0005829">
    <property type="term" value="C:cytosol"/>
    <property type="evidence" value="ECO:0000318"/>
    <property type="project" value="GO_Central"/>
</dbReference>
<dbReference type="GO" id="GO:0016604">
    <property type="term" value="C:nuclear body"/>
    <property type="evidence" value="ECO:0000314"/>
    <property type="project" value="HPA"/>
</dbReference>
<dbReference type="GO" id="GO:0005654">
    <property type="term" value="C:nucleoplasm"/>
    <property type="evidence" value="ECO:0000314"/>
    <property type="project" value="HPA"/>
</dbReference>
<dbReference type="GO" id="GO:0005634">
    <property type="term" value="C:nucleus"/>
    <property type="evidence" value="ECO:0000318"/>
    <property type="project" value="GO_Central"/>
</dbReference>
<dbReference type="GO" id="GO:0032991">
    <property type="term" value="C:protein-containing complex"/>
    <property type="evidence" value="ECO:0000314"/>
    <property type="project" value="UniProtKB"/>
</dbReference>
<dbReference type="GO" id="GO:0004843">
    <property type="term" value="F:cysteine-type deubiquitinase activity"/>
    <property type="evidence" value="ECO:0000314"/>
    <property type="project" value="UniProtKB"/>
</dbReference>
<dbReference type="GO" id="GO:0101005">
    <property type="term" value="F:deubiquitinase activity"/>
    <property type="evidence" value="ECO:0000315"/>
    <property type="project" value="UniProtKB"/>
</dbReference>
<dbReference type="GO" id="GO:0008283">
    <property type="term" value="P:cell population proliferation"/>
    <property type="evidence" value="ECO:0000315"/>
    <property type="project" value="UniProtKB"/>
</dbReference>
<dbReference type="GO" id="GO:0034644">
    <property type="term" value="P:cellular response to UV"/>
    <property type="evidence" value="ECO:0000314"/>
    <property type="project" value="UniProtKB"/>
</dbReference>
<dbReference type="GO" id="GO:0000077">
    <property type="term" value="P:DNA damage checkpoint signaling"/>
    <property type="evidence" value="ECO:0000315"/>
    <property type="project" value="UniProtKB"/>
</dbReference>
<dbReference type="GO" id="GO:0006974">
    <property type="term" value="P:DNA damage response"/>
    <property type="evidence" value="ECO:0000314"/>
    <property type="project" value="UniProtKB"/>
</dbReference>
<dbReference type="GO" id="GO:0006281">
    <property type="term" value="P:DNA repair"/>
    <property type="evidence" value="ECO:0007669"/>
    <property type="project" value="UniProtKB-KW"/>
</dbReference>
<dbReference type="GO" id="GO:0042771">
    <property type="term" value="P:intrinsic apoptotic signaling pathway in response to DNA damage by p53 class mediator"/>
    <property type="evidence" value="ECO:0000314"/>
    <property type="project" value="UniProtKB"/>
</dbReference>
<dbReference type="GO" id="GO:0016579">
    <property type="term" value="P:protein deubiquitination"/>
    <property type="evidence" value="ECO:0000314"/>
    <property type="project" value="UniProtKB"/>
</dbReference>
<dbReference type="GO" id="GO:0071947">
    <property type="term" value="P:protein deubiquitination involved in ubiquitin-dependent protein catabolic process"/>
    <property type="evidence" value="ECO:0000315"/>
    <property type="project" value="UniProtKB"/>
</dbReference>
<dbReference type="GO" id="GO:0031647">
    <property type="term" value="P:regulation of protein stability"/>
    <property type="evidence" value="ECO:0000315"/>
    <property type="project" value="UniProtKB"/>
</dbReference>
<dbReference type="GO" id="GO:0010212">
    <property type="term" value="P:response to ionizing radiation"/>
    <property type="evidence" value="ECO:0000314"/>
    <property type="project" value="UniProtKB"/>
</dbReference>
<dbReference type="CDD" id="cd02665">
    <property type="entry name" value="Peptidase_C19I"/>
    <property type="match status" value="1"/>
</dbReference>
<dbReference type="CDD" id="cd14355">
    <property type="entry name" value="UBA_UBP28"/>
    <property type="match status" value="1"/>
</dbReference>
<dbReference type="CDD" id="cd20487">
    <property type="entry name" value="USP28_C"/>
    <property type="match status" value="1"/>
</dbReference>
<dbReference type="FunFam" id="3.90.70.10:FF:000004">
    <property type="entry name" value="Putative ubiquitin carboxyl-terminal hydrolase 25"/>
    <property type="match status" value="1"/>
</dbReference>
<dbReference type="FunFam" id="1.10.8.10:FF:000046">
    <property type="entry name" value="ubiquitin carboxyl-terminal hydrolase 28 isoform X2"/>
    <property type="match status" value="1"/>
</dbReference>
<dbReference type="Gene3D" id="6.10.250.1720">
    <property type="match status" value="1"/>
</dbReference>
<dbReference type="Gene3D" id="3.90.70.10">
    <property type="entry name" value="Cysteine proteinases"/>
    <property type="match status" value="1"/>
</dbReference>
<dbReference type="Gene3D" id="1.10.8.10">
    <property type="entry name" value="DNA helicase RuvA subunit, C-terminal domain"/>
    <property type="match status" value="1"/>
</dbReference>
<dbReference type="InterPro" id="IPR038765">
    <property type="entry name" value="Papain-like_cys_pep_sf"/>
</dbReference>
<dbReference type="InterPro" id="IPR050164">
    <property type="entry name" value="Peptidase_C19"/>
</dbReference>
<dbReference type="InterPro" id="IPR001394">
    <property type="entry name" value="Peptidase_C19_UCH"/>
</dbReference>
<dbReference type="InterPro" id="IPR009060">
    <property type="entry name" value="UBA-like_sf"/>
</dbReference>
<dbReference type="InterPro" id="IPR054109">
    <property type="entry name" value="UBA_8"/>
</dbReference>
<dbReference type="InterPro" id="IPR054108">
    <property type="entry name" value="USP25/28_UIM"/>
</dbReference>
<dbReference type="InterPro" id="IPR018200">
    <property type="entry name" value="USP_CS"/>
</dbReference>
<dbReference type="InterPro" id="IPR028889">
    <property type="entry name" value="USP_dom"/>
</dbReference>
<dbReference type="PANTHER" id="PTHR24006">
    <property type="entry name" value="UBIQUITIN CARBOXYL-TERMINAL HYDROLASE"/>
    <property type="match status" value="1"/>
</dbReference>
<dbReference type="PANTHER" id="PTHR24006:SF678">
    <property type="entry name" value="UBIQUITIN CARBOXYL-TERMINAL HYDROLASE 28"/>
    <property type="match status" value="1"/>
</dbReference>
<dbReference type="Pfam" id="PF22566">
    <property type="entry name" value="UBA_8"/>
    <property type="match status" value="1"/>
</dbReference>
<dbReference type="Pfam" id="PF00443">
    <property type="entry name" value="UCH"/>
    <property type="match status" value="1"/>
</dbReference>
<dbReference type="Pfam" id="PF21909">
    <property type="entry name" value="USP_UIM_N"/>
    <property type="match status" value="1"/>
</dbReference>
<dbReference type="SUPFAM" id="SSF54001">
    <property type="entry name" value="Cysteine proteinases"/>
    <property type="match status" value="1"/>
</dbReference>
<dbReference type="SUPFAM" id="SSF46934">
    <property type="entry name" value="UBA-like"/>
    <property type="match status" value="1"/>
</dbReference>
<dbReference type="PROSITE" id="PS00972">
    <property type="entry name" value="USP_1"/>
    <property type="match status" value="1"/>
</dbReference>
<dbReference type="PROSITE" id="PS00973">
    <property type="entry name" value="USP_2"/>
    <property type="match status" value="1"/>
</dbReference>
<dbReference type="PROSITE" id="PS50235">
    <property type="entry name" value="USP_3"/>
    <property type="match status" value="1"/>
</dbReference>
<protein>
    <recommendedName>
        <fullName>Ubiquitin carboxyl-terminal hydrolase 28</fullName>
        <ecNumber>3.4.19.12</ecNumber>
    </recommendedName>
    <alternativeName>
        <fullName>Deubiquitinating enzyme 28</fullName>
    </alternativeName>
    <alternativeName>
        <fullName>Ubiquitin thioesterase 28</fullName>
    </alternativeName>
    <alternativeName>
        <fullName>Ubiquitin-specific-processing protease 28</fullName>
    </alternativeName>
</protein>
<accession>Q96RU2</accession>
<accession>B0YJC0</accession>
<accession>B0YJC1</accession>
<accession>Q6NZX9</accession>
<accession>Q9P213</accession>
<comment type="function">
    <text evidence="5 6 7 8 10">Deubiquitinase involved in DNA damage response checkpoint and MYC proto-oncogene stability. Involved in DNA damage induced apoptosis by specifically deubiquitinating proteins of the DNA damage pathway such as CLSPN. Also involved in G2 DNA damage checkpoint, by deubiquitinating CLSPN, and preventing its degradation by the anaphase promoting complex/cyclosome (APC/C). In contrast, it does not deubiquitinate PLK1. Specifically deubiquitinates MYC in the nucleoplasm, leading to prevent MYC degradation by the proteasome: acts by specifically interacting with isoform 1 of FBXW7 (FBW7alpha) in the nucleoplasm and counteracting ubiquitination of MYC by the SCF(FBW7) complex. In contrast, it does not interact with isoform 4 of FBXW7 (FBW7gamma) in the nucleolus, allowing MYC degradation and explaining the selective MYC degradation in the nucleolus. Deubiquitinates ZNF304, hence preventing ZNF304 degradation by the proteasome and leading to the activated KRAS-mediated promoter hypermethylation and transcriptional silencing of tumor suppressor genes (TSGs) in a subset of colorectal cancers (CRC) cells (PubMed:24623306).</text>
</comment>
<comment type="catalytic activity">
    <reaction>
        <text>Thiol-dependent hydrolysis of ester, thioester, amide, peptide and isopeptide bonds formed by the C-terminal Gly of ubiquitin (a 76-residue protein attached to proteins as an intracellular targeting signal).</text>
        <dbReference type="EC" id="3.4.19.12"/>
    </reaction>
</comment>
<comment type="subunit">
    <text evidence="5 6 7 10">Interacts with ZNF304 (PubMed:24623306). Interacts with PRKD1 (PubMed:24623306). Interacts with TP53BP1 (PubMed:16901786). Interacts with isoform 1 of FBXW7; following DNA damage, dissociates from FBXW7 leading to degradation of MYC (PubMed:17558397, PubMed:17873522).</text>
</comment>
<comment type="subcellular location">
    <subcellularLocation>
        <location evidence="6">Nucleus</location>
        <location evidence="6">Nucleoplasm</location>
    </subcellularLocation>
</comment>
<comment type="alternative products">
    <event type="alternative splicing"/>
    <isoform>
        <id>Q96RU2-1</id>
        <name>1</name>
        <sequence type="displayed"/>
    </isoform>
    <isoform>
        <id>Q96RU2-2</id>
        <name>2</name>
        <sequence type="described" ref="VSP_015580"/>
    </isoform>
    <isoform>
        <id>Q96RU2-3</id>
        <name>3</name>
        <sequence type="described" ref="VSP_057359 VSP_057360"/>
    </isoform>
</comment>
<comment type="induction">
    <text evidence="9 10">Down-regulated upon hypoxia (PubMed:20046830). Up-regulated by the transcription factor c-Jun/JUN in a KRAS-dependent manner in colorectal cancer (CRC) cells (PubMed:24623306).</text>
</comment>
<comment type="PTM">
    <text>Degraded upon nickel ion level or hypoxia exposure.</text>
</comment>
<comment type="PTM">
    <text evidence="5 10">Phosphorylated upon DNA damage at Ser-67 and Ser-714, by ATM or ATR (PubMed:16901786). Phosphorylated by PRKD1 (PubMed:24623306).</text>
</comment>
<comment type="similarity">
    <text evidence="13">Belongs to the peptidase C19 family. USP28 subfamily.</text>
</comment>
<sequence>MTAELQQDDAAGAADGHGSSCQMLLNQLREITGIQDPSFLHEALKASNGDITQAVSLLTDERVKEPSQDTVATEPSEVEGSAANKEVLAKVIDLTHDNKDDLQAAIALSLLESPKIQADGRDLNRMHEATSAETKRSKRKRCEVWGENPNPNDWRRVDGWPVGLKNVGNTCWFSAVIQSLFQLPEFRRLVLSYSLPQNVLENCRSHTEKRNIMFMQELQYLFALMMGSNRKFVDPSAALDLLKGAFRSSEEQQQDVSEFTHKLLDWLEDAFQLAVNVNSPRNKSENPMVQLFYGTFLTEGVREGKPFCNNETFGQYPLQVNGYRNLDECLEGAMVEGDVELLPSDHSVKYGQERWFTKLPPVLTFELSRFEFNQSLGQPEKIHNKLEFPQIIYMDRYMYRSKELIRNKRECIRKLKEEIKILQQKLERYVKYGSGPARFPLPDMLKYVIEFASTKPASESCPPESDTHMTLPLSSVHCSVSDQTSKESTSTESSSQDVESTFSSPEDSLPKSKPLTSSRSSMEMPSQPAPRTVTDEEINFVKTCLQRWRSEIEQDIQDLKTCIASTTQTIEQMYCDPLLRQVPYRLHAVLVHEGQANAGHYWAYIYNQPRQSWLKYNDISVTESSWEEVERDSYGGLRNVSAYCLMYINDKLPYFNAEAAPTESDQMSEVEALSVELKHYIQEDNWRFEQEVEEWEEEQSCKIPQMESSTNSSSQDYSTSQEPSVASSHGVRCLSSEHAVIVKEQTAQAIANTARAYEKSGVEAALSEVMLSPAMQGVILAIAKARQTFDRDGSEAGLIKAFHEEYSRLYQLAKETPTSHSDPRLQHVLVYFFQNEAPKRVVERTLLEQFADKNLSYDERSISIMKVAQAKLKEIGPDDMNMEEYKKWHEDYSLFRKVSVYLLTGLELYQKGKYQEALSYLVYAYQSNAALLMKGPRRGVKESVIALYRRKCLLELNAKAASLFETNDDHSVTEGINVMNELIIPCIHLIINNDISKDDLDAIEVMRNHWCSYLGQDIAENLQLCLGEFLPRLLDPSAEIIVLKEPPTIRPNSPYDLCSRFAAVMESIQGVSTVTVK</sequence>
<organism>
    <name type="scientific">Homo sapiens</name>
    <name type="common">Human</name>
    <dbReference type="NCBI Taxonomy" id="9606"/>
    <lineage>
        <taxon>Eukaryota</taxon>
        <taxon>Metazoa</taxon>
        <taxon>Chordata</taxon>
        <taxon>Craniata</taxon>
        <taxon>Vertebrata</taxon>
        <taxon>Euteleostomi</taxon>
        <taxon>Mammalia</taxon>
        <taxon>Eutheria</taxon>
        <taxon>Euarchontoglires</taxon>
        <taxon>Primates</taxon>
        <taxon>Haplorrhini</taxon>
        <taxon>Catarrhini</taxon>
        <taxon>Hominidae</taxon>
        <taxon>Homo</taxon>
    </lineage>
</organism>
<feature type="chain" id="PRO_0000080657" description="Ubiquitin carboxyl-terminal hydrolase 28">
    <location>
        <begin position="1"/>
        <end position="1077"/>
    </location>
</feature>
<feature type="domain" description="UIM" evidence="13">
    <location>
        <begin position="97"/>
        <end position="116"/>
    </location>
</feature>
<feature type="domain" description="USP">
    <location>
        <begin position="162"/>
        <end position="650"/>
    </location>
</feature>
<feature type="region of interest" description="Disordered" evidence="4">
    <location>
        <begin position="60"/>
        <end position="80"/>
    </location>
</feature>
<feature type="region of interest" description="Disordered" evidence="4">
    <location>
        <begin position="477"/>
        <end position="535"/>
    </location>
</feature>
<feature type="region of interest" description="Disordered" evidence="4">
    <location>
        <begin position="697"/>
        <end position="728"/>
    </location>
</feature>
<feature type="compositionally biased region" description="Low complexity" evidence="4">
    <location>
        <begin position="481"/>
        <end position="501"/>
    </location>
</feature>
<feature type="compositionally biased region" description="Polar residues" evidence="4">
    <location>
        <begin position="514"/>
        <end position="524"/>
    </location>
</feature>
<feature type="compositionally biased region" description="Low complexity" evidence="4">
    <location>
        <begin position="707"/>
        <end position="724"/>
    </location>
</feature>
<feature type="active site" description="Nucleophile">
    <location>
        <position position="171"/>
    </location>
</feature>
<feature type="active site" description="Proton acceptor" evidence="2 3">
    <location>
        <position position="600"/>
    </location>
</feature>
<feature type="modified residue" description="Phosphoserine" evidence="5">
    <location>
        <position position="67"/>
    </location>
</feature>
<feature type="modified residue" description="Phosphoserine" evidence="14">
    <location>
        <position position="375"/>
    </location>
</feature>
<feature type="modified residue" description="Phosphoserine" evidence="1">
    <location>
        <position position="550"/>
    </location>
</feature>
<feature type="modified residue" description="Phosphoserine" evidence="5">
    <location>
        <position position="714"/>
    </location>
</feature>
<feature type="modified residue" description="Phosphothreonine" evidence="15">
    <location>
        <position position="1048"/>
    </location>
</feature>
<feature type="cross-link" description="Glycyl lysine isopeptide (Lys-Gly) (interchain with G-Cter in SUMO2)" evidence="16">
    <location>
        <position position="99"/>
    </location>
</feature>
<feature type="splice variant" id="VSP_057359" description="In isoform 3." evidence="12">
    <original>P</original>
    <variation>E</variation>
    <location>
        <position position="583"/>
    </location>
</feature>
<feature type="splice variant" id="VSP_057360" description="In isoform 3." evidence="12">
    <location>
        <begin position="584"/>
        <end position="1077"/>
    </location>
</feature>
<feature type="splice variant" id="VSP_015580" description="In isoform 2." evidence="11">
    <location>
        <begin position="769"/>
        <end position="800"/>
    </location>
</feature>
<feature type="mutagenesis site" description="Abolishes deubiquitinase activity." evidence="5 6 10">
    <original>C</original>
    <variation>A</variation>
    <location>
        <position position="171"/>
    </location>
</feature>
<feature type="mutagenesis site" description="Prevents ZNF304 ubiquitination reduction." evidence="10">
    <original>S</original>
    <variation>A</variation>
    <location>
        <position position="899"/>
    </location>
</feature>
<feature type="sequence conflict" description="In Ref. 4; BAA96039." evidence="13" ref="4">
    <original>VQLFYGTFLTEGVRE</original>
    <variation>IVIVMSFLKSLSLCL</variation>
    <location>
        <begin position="289"/>
        <end position="303"/>
    </location>
</feature>
<feature type="helix" evidence="18">
    <location>
        <begin position="7"/>
        <end position="9"/>
    </location>
</feature>
<feature type="helix" evidence="17">
    <location>
        <begin position="23"/>
        <end position="32"/>
    </location>
</feature>
<feature type="helix" evidence="17">
    <location>
        <begin position="37"/>
        <end position="46"/>
    </location>
</feature>
<feature type="turn" evidence="17">
    <location>
        <begin position="47"/>
        <end position="49"/>
    </location>
</feature>
<feature type="helix" evidence="17">
    <location>
        <begin position="51"/>
        <end position="58"/>
    </location>
</feature>
<feature type="helix" evidence="17">
    <location>
        <begin position="60"/>
        <end position="63"/>
    </location>
</feature>
<feature type="strand" evidence="18">
    <location>
        <begin position="71"/>
        <end position="73"/>
    </location>
</feature>
<feature type="turn" evidence="18">
    <location>
        <begin position="84"/>
        <end position="86"/>
    </location>
</feature>
<feature type="strand" evidence="18">
    <location>
        <begin position="95"/>
        <end position="97"/>
    </location>
</feature>
<feature type="helix" evidence="17">
    <location>
        <begin position="100"/>
        <end position="111"/>
    </location>
</feature>
<feature type="helix" evidence="17">
    <location>
        <begin position="121"/>
        <end position="123"/>
    </location>
</feature>
<feature type="helix" evidence="22">
    <location>
        <begin position="151"/>
        <end position="154"/>
    </location>
</feature>
<feature type="strand" evidence="20">
    <location>
        <begin position="167"/>
        <end position="169"/>
    </location>
</feature>
<feature type="helix" evidence="20">
    <location>
        <begin position="171"/>
        <end position="181"/>
    </location>
</feature>
<feature type="helix" evidence="20">
    <location>
        <begin position="184"/>
        <end position="191"/>
    </location>
</feature>
<feature type="helix" evidence="20">
    <location>
        <begin position="197"/>
        <end position="201"/>
    </location>
</feature>
<feature type="helix" evidence="20">
    <location>
        <begin position="206"/>
        <end position="227"/>
    </location>
</feature>
<feature type="strand" evidence="20">
    <location>
        <begin position="229"/>
        <end position="233"/>
    </location>
</feature>
<feature type="helix" evidence="20">
    <location>
        <begin position="236"/>
        <end position="242"/>
    </location>
</feature>
<feature type="helix" evidence="20">
    <location>
        <begin position="243"/>
        <end position="245"/>
    </location>
</feature>
<feature type="helix" evidence="20">
    <location>
        <begin position="256"/>
        <end position="278"/>
    </location>
</feature>
<feature type="helix" evidence="20">
    <location>
        <begin position="287"/>
        <end position="292"/>
    </location>
</feature>
<feature type="strand" evidence="20">
    <location>
        <begin position="294"/>
        <end position="302"/>
    </location>
</feature>
<feature type="strand" evidence="20">
    <location>
        <begin position="305"/>
        <end position="319"/>
    </location>
</feature>
<feature type="helix" evidence="20">
    <location>
        <begin position="326"/>
        <end position="333"/>
    </location>
</feature>
<feature type="strand" evidence="24">
    <location>
        <begin position="335"/>
        <end position="337"/>
    </location>
</feature>
<feature type="strand" evidence="20">
    <location>
        <begin position="353"/>
        <end position="358"/>
    </location>
</feature>
<feature type="strand" evidence="20">
    <location>
        <begin position="361"/>
        <end position="368"/>
    </location>
</feature>
<feature type="strand" evidence="20">
    <location>
        <begin position="370"/>
        <end position="373"/>
    </location>
</feature>
<feature type="turn" evidence="20">
    <location>
        <begin position="374"/>
        <end position="377"/>
    </location>
</feature>
<feature type="strand" evidence="20">
    <location>
        <begin position="378"/>
        <end position="381"/>
    </location>
</feature>
<feature type="strand" evidence="20">
    <location>
        <begin position="390"/>
        <end position="393"/>
    </location>
</feature>
<feature type="helix" evidence="20">
    <location>
        <begin position="395"/>
        <end position="397"/>
    </location>
</feature>
<feature type="helix" evidence="21">
    <location>
        <begin position="399"/>
        <end position="401"/>
    </location>
</feature>
<feature type="helix" evidence="23">
    <location>
        <begin position="402"/>
        <end position="430"/>
    </location>
</feature>
<feature type="strand" evidence="23">
    <location>
        <begin position="434"/>
        <end position="436"/>
    </location>
</feature>
<feature type="helix" evidence="23">
    <location>
        <begin position="441"/>
        <end position="453"/>
    </location>
</feature>
<feature type="helix" evidence="23">
    <location>
        <begin position="535"/>
        <end position="571"/>
    </location>
</feature>
<feature type="turn" evidence="23">
    <location>
        <begin position="572"/>
        <end position="574"/>
    </location>
</feature>
<feature type="helix" evidence="23">
    <location>
        <begin position="577"/>
        <end position="579"/>
    </location>
</feature>
<feature type="strand" evidence="20">
    <location>
        <begin position="583"/>
        <end position="595"/>
    </location>
</feature>
<feature type="strand" evidence="20">
    <location>
        <begin position="598"/>
        <end position="607"/>
    </location>
</feature>
<feature type="turn" evidence="20">
    <location>
        <begin position="608"/>
        <end position="611"/>
    </location>
</feature>
<feature type="strand" evidence="20">
    <location>
        <begin position="612"/>
        <end position="617"/>
    </location>
</feature>
<feature type="strand" evidence="20">
    <location>
        <begin position="620"/>
        <end position="623"/>
    </location>
</feature>
<feature type="helix" evidence="20">
    <location>
        <begin position="626"/>
        <end position="633"/>
    </location>
</feature>
<feature type="strand" evidence="20">
    <location>
        <begin position="640"/>
        <end position="649"/>
    </location>
</feature>
<feature type="helix" evidence="19">
    <location>
        <begin position="653"/>
        <end position="655"/>
    </location>
</feature>
<feature type="helix" evidence="20">
    <location>
        <begin position="668"/>
        <end position="671"/>
    </location>
</feature>
<feature type="helix" evidence="20">
    <location>
        <begin position="675"/>
        <end position="698"/>
    </location>
</feature>
<feature type="cross-link" description="Glycyl lysine isopeptide (Lys-Gly) (interchain with G-Cter in SUMO2)" evidence="16">
    <location sequence="Q96RU2-2">
        <position position="759"/>
    </location>
</feature>
<keyword id="KW-0002">3D-structure</keyword>
<keyword id="KW-0025">Alternative splicing</keyword>
<keyword id="KW-0227">DNA damage</keyword>
<keyword id="KW-0234">DNA repair</keyword>
<keyword id="KW-0378">Hydrolase</keyword>
<keyword id="KW-1017">Isopeptide bond</keyword>
<keyword id="KW-0539">Nucleus</keyword>
<keyword id="KW-0597">Phosphoprotein</keyword>
<keyword id="KW-0645">Protease</keyword>
<keyword id="KW-1267">Proteomics identification</keyword>
<keyword id="KW-1185">Reference proteome</keyword>
<keyword id="KW-0788">Thiol protease</keyword>
<keyword id="KW-0832">Ubl conjugation</keyword>
<keyword id="KW-0833">Ubl conjugation pathway</keyword>
<name>UBP28_HUMAN</name>
<reference key="1">
    <citation type="journal article" date="2001" name="Genome Biol.">
        <title>Characterization of alternatively spliced products and tissue-specific isoforms of USP28 and USP25.</title>
        <authorList>
            <person name="Valero R."/>
            <person name="Bayes M."/>
            <person name="Francisca Sanchez-Font M."/>
            <person name="Gonzalez-Angulo O."/>
            <person name="Gonzalez-Duarte R."/>
            <person name="Marfany G."/>
        </authorList>
    </citation>
    <scope>NUCLEOTIDE SEQUENCE [MRNA] (ISOFORM 1)</scope>
</reference>
<reference key="2">
    <citation type="submission" date="2007-02" db="EMBL/GenBank/DDBJ databases">
        <authorList>
            <consortium name="NHLBI resequencing and genotyping service (RS&amp;G)"/>
        </authorList>
    </citation>
    <scope>NUCLEOTIDE SEQUENCE [GENOMIC DNA]</scope>
</reference>
<reference key="3">
    <citation type="journal article" date="2006" name="Nature">
        <title>Human chromosome 11 DNA sequence and analysis including novel gene identification.</title>
        <authorList>
            <person name="Taylor T.D."/>
            <person name="Noguchi H."/>
            <person name="Totoki Y."/>
            <person name="Toyoda A."/>
            <person name="Kuroki Y."/>
            <person name="Dewar K."/>
            <person name="Lloyd C."/>
            <person name="Itoh T."/>
            <person name="Takeda T."/>
            <person name="Kim D.-W."/>
            <person name="She X."/>
            <person name="Barlow K.F."/>
            <person name="Bloom T."/>
            <person name="Bruford E."/>
            <person name="Chang J.L."/>
            <person name="Cuomo C.A."/>
            <person name="Eichler E."/>
            <person name="FitzGerald M.G."/>
            <person name="Jaffe D.B."/>
            <person name="LaButti K."/>
            <person name="Nicol R."/>
            <person name="Park H.-S."/>
            <person name="Seaman C."/>
            <person name="Sougnez C."/>
            <person name="Yang X."/>
            <person name="Zimmer A.R."/>
            <person name="Zody M.C."/>
            <person name="Birren B.W."/>
            <person name="Nusbaum C."/>
            <person name="Fujiyama A."/>
            <person name="Hattori M."/>
            <person name="Rogers J."/>
            <person name="Lander E.S."/>
            <person name="Sakaki Y."/>
        </authorList>
    </citation>
    <scope>NUCLEOTIDE SEQUENCE [LARGE SCALE GENOMIC DNA]</scope>
</reference>
<reference key="4">
    <citation type="submission" date="2005-07" db="EMBL/GenBank/DDBJ databases">
        <authorList>
            <person name="Mural R.J."/>
            <person name="Istrail S."/>
            <person name="Sutton G.G."/>
            <person name="Florea L."/>
            <person name="Halpern A.L."/>
            <person name="Mobarry C.M."/>
            <person name="Lippert R."/>
            <person name="Walenz B."/>
            <person name="Shatkay H."/>
            <person name="Dew I."/>
            <person name="Miller J.R."/>
            <person name="Flanigan M.J."/>
            <person name="Edwards N.J."/>
            <person name="Bolanos R."/>
            <person name="Fasulo D."/>
            <person name="Halldorsson B.V."/>
            <person name="Hannenhalli S."/>
            <person name="Turner R."/>
            <person name="Yooseph S."/>
            <person name="Lu F."/>
            <person name="Nusskern D.R."/>
            <person name="Shue B.C."/>
            <person name="Zheng X.H."/>
            <person name="Zhong F."/>
            <person name="Delcher A.L."/>
            <person name="Huson D.H."/>
            <person name="Kravitz S.A."/>
            <person name="Mouchard L."/>
            <person name="Reinert K."/>
            <person name="Remington K.A."/>
            <person name="Clark A.G."/>
            <person name="Waterman M.S."/>
            <person name="Eichler E.E."/>
            <person name="Adams M.D."/>
            <person name="Hunkapiller M.W."/>
            <person name="Myers E.W."/>
            <person name="Venter J.C."/>
        </authorList>
    </citation>
    <scope>NUCLEOTIDE SEQUENCE [LARGE SCALE GENOMIC DNA]</scope>
</reference>
<reference key="5">
    <citation type="journal article" date="2004" name="Genome Res.">
        <title>The status, quality, and expansion of the NIH full-length cDNA project: the Mammalian Gene Collection (MGC).</title>
        <authorList>
            <consortium name="The MGC Project Team"/>
        </authorList>
    </citation>
    <scope>NUCLEOTIDE SEQUENCE [LARGE SCALE MRNA] (ISOFORM 3)</scope>
    <source>
        <tissue>Eye</tissue>
    </source>
</reference>
<reference key="6">
    <citation type="journal article" date="2000" name="DNA Res.">
        <title>Prediction of the coding sequences of unidentified human genes. XVII. The complete sequences of 100 new cDNA clones from brain which code for large proteins in vitro.</title>
        <authorList>
            <person name="Nagase T."/>
            <person name="Kikuno R."/>
            <person name="Ishikawa K."/>
            <person name="Hirosawa M."/>
            <person name="Ohara O."/>
        </authorList>
    </citation>
    <scope>NUCLEOTIDE SEQUENCE [LARGE SCALE MRNA] OF 289-1077 (ISOFORM 2)</scope>
    <source>
        <tissue>Brain</tissue>
    </source>
</reference>
<reference key="7">
    <citation type="journal article" date="2006" name="Cell">
        <title>A role for the deubiquitinating enzyme USP28 in control of the DNA-damage response.</title>
        <authorList>
            <person name="Zhang D."/>
            <person name="Zaugg K."/>
            <person name="Mak T.W."/>
            <person name="Elledge S.J."/>
        </authorList>
    </citation>
    <scope>FUNCTION</scope>
    <scope>INTERACTION WITH TP53BP1</scope>
    <scope>PHOSPHORYLATION AT SER-67 AND SER-714</scope>
    <scope>MUTAGENESIS OF CYS-171</scope>
</reference>
<reference key="8">
    <citation type="journal article" date="2007" name="Cell Cycle">
        <title>Fbw7 and Usp28 regulate myc protein stability in response to DNA damage.</title>
        <authorList>
            <person name="Popov N."/>
            <person name="Herold S."/>
            <person name="Llamazares M."/>
            <person name="Schulein C."/>
            <person name="Eilers M."/>
        </authorList>
    </citation>
    <scope>FUNCTION</scope>
    <scope>INTERACTION WITH FBXW7</scope>
</reference>
<reference key="9">
    <citation type="journal article" date="2007" name="Nat. Cell Biol.">
        <title>The ubiquitin-specific protease USP28 is required for MYC stability.</title>
        <authorList>
            <person name="Popov N."/>
            <person name="Wanzel M."/>
            <person name="Madiredjo M."/>
            <person name="Zhang D."/>
            <person name="Beijersbergen R."/>
            <person name="Bernards R."/>
            <person name="Moll R."/>
            <person name="Elledge S.J."/>
            <person name="Eilers M."/>
        </authorList>
    </citation>
    <scope>FUNCTION</scope>
    <scope>SUBCELLULAR LOCATION</scope>
    <scope>INTERACTION WITH FBXW7</scope>
    <scope>MUTAGENESIS OF CYS-171</scope>
</reference>
<reference key="10">
    <citation type="journal article" date="2007" name="Science">
        <title>ATM and ATR substrate analysis reveals extensive protein networks responsive to DNA damage.</title>
        <authorList>
            <person name="Matsuoka S."/>
            <person name="Ballif B.A."/>
            <person name="Smogorzewska A."/>
            <person name="McDonald E.R. III"/>
            <person name="Hurov K.E."/>
            <person name="Luo J."/>
            <person name="Bakalarski C.E."/>
            <person name="Zhao Z."/>
            <person name="Solimini N."/>
            <person name="Lerenthal Y."/>
            <person name="Shiloh Y."/>
            <person name="Gygi S.P."/>
            <person name="Elledge S.J."/>
        </authorList>
    </citation>
    <scope>IDENTIFICATION BY MASS SPECTROMETRY [LARGE SCALE ANALYSIS]</scope>
    <source>
        <tissue>Embryonic kidney</tissue>
    </source>
</reference>
<reference key="11">
    <citation type="journal article" date="2008" name="Cell">
        <title>The Cdc14B-Cdh1-Plk1 axis controls the G2 DNA-damage-response checkpoint.</title>
        <authorList>
            <person name="Bassermann F."/>
            <person name="Frescas D."/>
            <person name="Guardavaccaro D."/>
            <person name="Busino L."/>
            <person name="Peschiaroli A."/>
            <person name="Pagano M."/>
        </authorList>
    </citation>
    <scope>FUNCTION</scope>
</reference>
<reference key="12">
    <citation type="journal article" date="2009" name="PLoS ONE">
        <title>Mechanisms of c-myc degradation by nickel compounds and hypoxia.</title>
        <authorList>
            <person name="Li Q."/>
            <person name="Kluz T."/>
            <person name="Sun H."/>
            <person name="Costa M."/>
        </authorList>
    </citation>
    <scope>DEGRADATION</scope>
    <scope>INDUCTION</scope>
</reference>
<reference key="13">
    <citation type="journal article" date="2011" name="BMC Syst. Biol.">
        <title>Initial characterization of the human central proteome.</title>
        <authorList>
            <person name="Burkard T.R."/>
            <person name="Planyavsky M."/>
            <person name="Kaupe I."/>
            <person name="Breitwieser F.P."/>
            <person name="Buerckstuemmer T."/>
            <person name="Bennett K.L."/>
            <person name="Superti-Furga G."/>
            <person name="Colinge J."/>
        </authorList>
    </citation>
    <scope>IDENTIFICATION BY MASS SPECTROMETRY [LARGE SCALE ANALYSIS]</scope>
</reference>
<reference key="14">
    <citation type="journal article" date="2013" name="J. Proteome Res.">
        <title>Toward a comprehensive characterization of a human cancer cell phosphoproteome.</title>
        <authorList>
            <person name="Zhou H."/>
            <person name="Di Palma S."/>
            <person name="Preisinger C."/>
            <person name="Peng M."/>
            <person name="Polat A.N."/>
            <person name="Heck A.J."/>
            <person name="Mohammed S."/>
        </authorList>
    </citation>
    <scope>PHOSPHORYLATION [LARGE SCALE ANALYSIS] AT SER-375</scope>
    <scope>IDENTIFICATION BY MASS SPECTROMETRY [LARGE SCALE ANALYSIS]</scope>
    <source>
        <tissue>Cervix carcinoma</tissue>
        <tissue>Erythroleukemia</tissue>
    </source>
</reference>
<reference key="15">
    <citation type="journal article" date="2014" name="Elife">
        <title>A KRAS-directed transcriptional silencing pathway that mediates the CpG island methylator phenotype.</title>
        <authorList>
            <person name="Serra R.W."/>
            <person name="Fang M."/>
            <person name="Park S.M."/>
            <person name="Hutchinson L."/>
            <person name="Green M.R."/>
        </authorList>
    </citation>
    <scope>FUNCTION</scope>
    <scope>INTERACTION WITH PRKD1 AND ZNF304</scope>
    <scope>PHOSPHORYLATION</scope>
    <scope>MUTAGENESIS OF CYS-171 AND SER-899</scope>
    <scope>INDUCTION</scope>
</reference>
<reference key="16">
    <citation type="journal article" date="2014" name="J. Proteomics">
        <title>An enzyme assisted RP-RPLC approach for in-depth analysis of human liver phosphoproteome.</title>
        <authorList>
            <person name="Bian Y."/>
            <person name="Song C."/>
            <person name="Cheng K."/>
            <person name="Dong M."/>
            <person name="Wang F."/>
            <person name="Huang J."/>
            <person name="Sun D."/>
            <person name="Wang L."/>
            <person name="Ye M."/>
            <person name="Zou H."/>
        </authorList>
    </citation>
    <scope>PHOSPHORYLATION [LARGE SCALE ANALYSIS] AT THR-1048</scope>
    <scope>IDENTIFICATION BY MASS SPECTROMETRY [LARGE SCALE ANALYSIS]</scope>
    <source>
        <tissue>Liver</tissue>
    </source>
</reference>
<reference key="17">
    <citation type="journal article" date="2017" name="Nat. Struct. Mol. Biol.">
        <title>Site-specific mapping of the human SUMO proteome reveals co-modification with phosphorylation.</title>
        <authorList>
            <person name="Hendriks I.A."/>
            <person name="Lyon D."/>
            <person name="Young C."/>
            <person name="Jensen L.J."/>
            <person name="Vertegaal A.C."/>
            <person name="Nielsen M.L."/>
        </authorList>
    </citation>
    <scope>SUMOYLATION [LARGE SCALE ANALYSIS] AT LYS-99</scope>
    <scope>SUMOYLATION [LARGE SCALE ANALYSIS] AT LYS-759 (ISOFORM 2)</scope>
    <scope>IDENTIFICATION BY MASS SPECTROMETRY [LARGE SCALE ANALYSIS]</scope>
</reference>
<reference key="18">
    <citation type="submission" date="2012-07" db="PDB data bank">
        <title>NMR solution structure of the N-terminal domain of human USP28.</title>
        <authorList>
            <consortium name="Northeast structural genomics consortium (NESG)"/>
        </authorList>
    </citation>
    <scope>STRUCTURE BY NMR OF 22-132</scope>
</reference>
<gene>
    <name type="primary">USP28</name>
    <name type="synonym">KIAA1515</name>
</gene>
<proteinExistence type="evidence at protein level"/>